<keyword id="KW-0997">Cell inner membrane</keyword>
<keyword id="KW-1003">Cell membrane</keyword>
<keyword id="KW-0472">Membrane</keyword>
<keyword id="KW-1185">Reference proteome</keyword>
<keyword id="KW-0812">Transmembrane</keyword>
<keyword id="KW-1133">Transmembrane helix</keyword>
<keyword id="KW-0813">Transport</keyword>
<feature type="chain" id="PRO_0000059979" description="Vitamin B12 import system permease protein BtuC">
    <location>
        <begin position="1"/>
        <end position="331"/>
    </location>
</feature>
<feature type="transmembrane region" description="Helical" evidence="1">
    <location>
        <begin position="20"/>
        <end position="42"/>
    </location>
</feature>
<feature type="transmembrane region" description="Helical" evidence="1">
    <location>
        <begin position="62"/>
        <end position="84"/>
    </location>
</feature>
<feature type="transmembrane region" description="Helical" evidence="1">
    <location>
        <begin position="91"/>
        <end position="113"/>
    </location>
</feature>
<feature type="transmembrane region" description="Helical" evidence="1">
    <location>
        <begin position="117"/>
        <end position="136"/>
    </location>
</feature>
<feature type="transmembrane region" description="Helical" evidence="1">
    <location>
        <begin position="148"/>
        <end position="170"/>
    </location>
</feature>
<feature type="transmembrane region" description="Helical" evidence="1">
    <location>
        <begin position="190"/>
        <end position="209"/>
    </location>
</feature>
<feature type="transmembrane region" description="Helical" evidence="1">
    <location>
        <begin position="240"/>
        <end position="262"/>
    </location>
</feature>
<feature type="transmembrane region" description="Helical" evidence="1">
    <location>
        <begin position="277"/>
        <end position="299"/>
    </location>
</feature>
<feature type="transmembrane region" description="Helical" evidence="1">
    <location>
        <begin position="306"/>
        <end position="325"/>
    </location>
</feature>
<organism>
    <name type="scientific">Vibrio cholerae serotype O1 (strain ATCC 39315 / El Tor Inaba N16961)</name>
    <dbReference type="NCBI Taxonomy" id="243277"/>
    <lineage>
        <taxon>Bacteria</taxon>
        <taxon>Pseudomonadati</taxon>
        <taxon>Pseudomonadota</taxon>
        <taxon>Gammaproteobacteria</taxon>
        <taxon>Vibrionales</taxon>
        <taxon>Vibrionaceae</taxon>
        <taxon>Vibrio</taxon>
    </lineage>
</organism>
<proteinExistence type="inferred from homology"/>
<sequence>MDFHRLLQHKQQRWQRSSYLLIGLFLSVCVLYLLVGELWLSPFSAWSSLEQQLVWELRLPRLLAAAVIGASLAVAGATLQVLLGNVLAEPGVVGVSGGASVAMVILLLFFPSLNSPVAFMAAAVLGALLFTLLLVVMARKLRLTTARLLLVGVALGILSGAVVTWAFYFSDDLGLRQLMYWLMGSVAGVSWYQHLLSLVAVPVVIWLVLQGGVLDKLMLGEGHAKQLGIDIHRVRWRLILAIALLVGASVALGGVIGFVGLVVPHLLRLTLGSENRLLLPLSALCGALLLVSADLIARLALGSGELPLGVVTTTLGAPIFIWMLVRNHDSC</sequence>
<dbReference type="EMBL" id="AE003852">
    <property type="protein sequence ID" value="AAF94403.1"/>
    <property type="status" value="ALT_INIT"/>
    <property type="molecule type" value="Genomic_DNA"/>
</dbReference>
<dbReference type="PIR" id="G82224">
    <property type="entry name" value="G82224"/>
</dbReference>
<dbReference type="RefSeq" id="NP_230889.1">
    <property type="nucleotide sequence ID" value="NC_002505.1"/>
</dbReference>
<dbReference type="RefSeq" id="WP_000345511.1">
    <property type="nucleotide sequence ID" value="NZ_LT906614.1"/>
</dbReference>
<dbReference type="SMR" id="Q9KSL2"/>
<dbReference type="STRING" id="243277.VC_1244"/>
<dbReference type="DNASU" id="2614681"/>
<dbReference type="EnsemblBacteria" id="AAF94403">
    <property type="protein sequence ID" value="AAF94403"/>
    <property type="gene ID" value="VC_1244"/>
</dbReference>
<dbReference type="KEGG" id="vch:VC_1244"/>
<dbReference type="PATRIC" id="fig|243277.26.peg.1184"/>
<dbReference type="eggNOG" id="COG4139">
    <property type="taxonomic scope" value="Bacteria"/>
</dbReference>
<dbReference type="HOGENOM" id="CLU_013016_0_3_6"/>
<dbReference type="Proteomes" id="UP000000584">
    <property type="component" value="Chromosome 1"/>
</dbReference>
<dbReference type="GO" id="GO:0005886">
    <property type="term" value="C:plasma membrane"/>
    <property type="evidence" value="ECO:0000318"/>
    <property type="project" value="GO_Central"/>
</dbReference>
<dbReference type="GO" id="GO:0022857">
    <property type="term" value="F:transmembrane transporter activity"/>
    <property type="evidence" value="ECO:0000318"/>
    <property type="project" value="GO_Central"/>
</dbReference>
<dbReference type="GO" id="GO:0090482">
    <property type="term" value="F:vitamin transmembrane transporter activity"/>
    <property type="evidence" value="ECO:0007669"/>
    <property type="project" value="UniProtKB-UniRule"/>
</dbReference>
<dbReference type="GO" id="GO:0015889">
    <property type="term" value="P:cobalamin transport"/>
    <property type="evidence" value="ECO:0000318"/>
    <property type="project" value="GO_Central"/>
</dbReference>
<dbReference type="CDD" id="cd06550">
    <property type="entry name" value="TM_ABC_iron-siderophores_like"/>
    <property type="match status" value="1"/>
</dbReference>
<dbReference type="FunFam" id="1.10.3470.10:FF:000001">
    <property type="entry name" value="Vitamin B12 ABC transporter permease BtuC"/>
    <property type="match status" value="1"/>
</dbReference>
<dbReference type="Gene3D" id="1.10.3470.10">
    <property type="entry name" value="ABC transporter involved in vitamin B12 uptake, BtuC"/>
    <property type="match status" value="1"/>
</dbReference>
<dbReference type="HAMAP" id="MF_01004">
    <property type="entry name" value="BtuC"/>
    <property type="match status" value="1"/>
</dbReference>
<dbReference type="InterPro" id="IPR037294">
    <property type="entry name" value="ABC_BtuC-like"/>
</dbReference>
<dbReference type="InterPro" id="IPR023691">
    <property type="entry name" value="ABC_transptr_BtuC"/>
</dbReference>
<dbReference type="InterPro" id="IPR000522">
    <property type="entry name" value="ABC_transptr_permease_BtuC"/>
</dbReference>
<dbReference type="NCBIfam" id="NF003001">
    <property type="entry name" value="PRK03784.1"/>
    <property type="match status" value="1"/>
</dbReference>
<dbReference type="PANTHER" id="PTHR30472">
    <property type="entry name" value="FERRIC ENTEROBACTIN TRANSPORT SYSTEM PERMEASE PROTEIN"/>
    <property type="match status" value="1"/>
</dbReference>
<dbReference type="PANTHER" id="PTHR30472:SF29">
    <property type="entry name" value="VITAMIN B12 IMPORT SYSTEM PERMEASE PROTEIN BTUC"/>
    <property type="match status" value="1"/>
</dbReference>
<dbReference type="Pfam" id="PF01032">
    <property type="entry name" value="FecCD"/>
    <property type="match status" value="1"/>
</dbReference>
<dbReference type="SUPFAM" id="SSF81345">
    <property type="entry name" value="ABC transporter involved in vitamin B12 uptake, BtuC"/>
    <property type="match status" value="1"/>
</dbReference>
<reference key="1">
    <citation type="journal article" date="2000" name="Nature">
        <title>DNA sequence of both chromosomes of the cholera pathogen Vibrio cholerae.</title>
        <authorList>
            <person name="Heidelberg J.F."/>
            <person name="Eisen J.A."/>
            <person name="Nelson W.C."/>
            <person name="Clayton R.A."/>
            <person name="Gwinn M.L."/>
            <person name="Dodson R.J."/>
            <person name="Haft D.H."/>
            <person name="Hickey E.K."/>
            <person name="Peterson J.D."/>
            <person name="Umayam L.A."/>
            <person name="Gill S.R."/>
            <person name="Nelson K.E."/>
            <person name="Read T.D."/>
            <person name="Tettelin H."/>
            <person name="Richardson D.L."/>
            <person name="Ermolaeva M.D."/>
            <person name="Vamathevan J.J."/>
            <person name="Bass S."/>
            <person name="Qin H."/>
            <person name="Dragoi I."/>
            <person name="Sellers P."/>
            <person name="McDonald L.A."/>
            <person name="Utterback T.R."/>
            <person name="Fleischmann R.D."/>
            <person name="Nierman W.C."/>
            <person name="White O."/>
            <person name="Salzberg S.L."/>
            <person name="Smith H.O."/>
            <person name="Colwell R.R."/>
            <person name="Mekalanos J.J."/>
            <person name="Venter J.C."/>
            <person name="Fraser C.M."/>
        </authorList>
    </citation>
    <scope>NUCLEOTIDE SEQUENCE [LARGE SCALE GENOMIC DNA]</scope>
    <source>
        <strain>ATCC 39315 / El Tor Inaba N16961</strain>
    </source>
</reference>
<protein>
    <recommendedName>
        <fullName evidence="1">Vitamin B12 import system permease protein BtuC</fullName>
    </recommendedName>
</protein>
<accession>Q9KSL2</accession>
<evidence type="ECO:0000255" key="1">
    <source>
        <dbReference type="HAMAP-Rule" id="MF_01004"/>
    </source>
</evidence>
<evidence type="ECO:0000305" key="2"/>
<comment type="function">
    <text evidence="1">Part of the ABC transporter complex BtuCDF involved in vitamin B12 import. Involved in the translocation of the substrate across the membrane.</text>
</comment>
<comment type="subunit">
    <text evidence="1">The complex is composed of two ATP-binding proteins (BtuD), two transmembrane proteins (BtuC) and a solute-binding protein (BtuF).</text>
</comment>
<comment type="subcellular location">
    <subcellularLocation>
        <location evidence="1">Cell inner membrane</location>
        <topology evidence="1">Multi-pass membrane protein</topology>
    </subcellularLocation>
</comment>
<comment type="similarity">
    <text evidence="1">Belongs to the binding-protein-dependent transport system permease family. FecCD subfamily.</text>
</comment>
<comment type="sequence caution" evidence="2">
    <conflict type="erroneous initiation">
        <sequence resource="EMBL-CDS" id="AAF94403"/>
    </conflict>
</comment>
<gene>
    <name evidence="1" type="primary">btuC</name>
    <name type="ordered locus">VC_1244</name>
</gene>
<name>BTUC_VIBCH</name>